<reference key="1">
    <citation type="journal article" date="2003" name="Mol. Microbiol.">
        <title>An integrated analysis of the genome of the hyperthermophilic archaeon Pyrococcus abyssi.</title>
        <authorList>
            <person name="Cohen G.N."/>
            <person name="Barbe V."/>
            <person name="Flament D."/>
            <person name="Galperin M."/>
            <person name="Heilig R."/>
            <person name="Lecompte O."/>
            <person name="Poch O."/>
            <person name="Prieur D."/>
            <person name="Querellou J."/>
            <person name="Ripp R."/>
            <person name="Thierry J.-C."/>
            <person name="Van der Oost J."/>
            <person name="Weissenbach J."/>
            <person name="Zivanovic Y."/>
            <person name="Forterre P."/>
        </authorList>
    </citation>
    <scope>NUCLEOTIDE SEQUENCE [LARGE SCALE GENOMIC DNA]</scope>
    <source>
        <strain>GE5 / Orsay</strain>
    </source>
</reference>
<reference key="2">
    <citation type="journal article" date="2012" name="Curr. Microbiol.">
        <title>Re-annotation of two hyperthermophilic archaea Pyrococcus abyssi GE5 and Pyrococcus furiosus DSM 3638.</title>
        <authorList>
            <person name="Gao J."/>
            <person name="Wang J."/>
        </authorList>
    </citation>
    <scope>GENOME REANNOTATION</scope>
    <source>
        <strain>GE5 / Orsay</strain>
    </source>
</reference>
<name>MOAA_PYRAB</name>
<gene>
    <name evidence="1" type="primary">moaA</name>
    <name type="ordered locus">PYRAB01120</name>
    <name type="ORF">PAB2273</name>
</gene>
<protein>
    <recommendedName>
        <fullName evidence="1">Probable GTP 3',8-cyclase</fullName>
        <ecNumber evidence="1">4.1.99.22</ecNumber>
    </recommendedName>
    <alternativeName>
        <fullName evidence="1">Molybdenum cofactor biosynthesis protein A</fullName>
    </alternativeName>
</protein>
<comment type="function">
    <text evidence="1">Catalyzes the cyclization of GTP to (8S)-3',8-cyclo-7,8-dihydroguanosine 5'-triphosphate.</text>
</comment>
<comment type="catalytic activity">
    <reaction evidence="1">
        <text>GTP + AH2 + S-adenosyl-L-methionine = (8S)-3',8-cyclo-7,8-dihydroguanosine 5'-triphosphate + 5'-deoxyadenosine + L-methionine + A + H(+)</text>
        <dbReference type="Rhea" id="RHEA:49576"/>
        <dbReference type="ChEBI" id="CHEBI:13193"/>
        <dbReference type="ChEBI" id="CHEBI:15378"/>
        <dbReference type="ChEBI" id="CHEBI:17319"/>
        <dbReference type="ChEBI" id="CHEBI:17499"/>
        <dbReference type="ChEBI" id="CHEBI:37565"/>
        <dbReference type="ChEBI" id="CHEBI:57844"/>
        <dbReference type="ChEBI" id="CHEBI:59789"/>
        <dbReference type="ChEBI" id="CHEBI:131766"/>
        <dbReference type="EC" id="4.1.99.22"/>
    </reaction>
</comment>
<comment type="cofactor">
    <cofactor evidence="1">
        <name>[4Fe-4S] cluster</name>
        <dbReference type="ChEBI" id="CHEBI:49883"/>
    </cofactor>
    <text evidence="1">Binds 2 [4Fe-4S] clusters. Binds 1 [4Fe-4S] cluster coordinated with 3 cysteines and an exchangeable S-adenosyl-L-methionine and 1 [4Fe-4S] cluster coordinated with 3 cysteines and the GTP-derived substrate.</text>
</comment>
<comment type="pathway">
    <text evidence="1">Cofactor biosynthesis; molybdopterin biosynthesis.</text>
</comment>
<comment type="similarity">
    <text evidence="1">Belongs to the radical SAM superfamily. MoaA family.</text>
</comment>
<evidence type="ECO:0000255" key="1">
    <source>
        <dbReference type="HAMAP-Rule" id="MF_01225"/>
    </source>
</evidence>
<evidence type="ECO:0000255" key="2">
    <source>
        <dbReference type="PROSITE-ProRule" id="PRU01266"/>
    </source>
</evidence>
<sequence>MLIDRFGRPVTNLRISLTKECNLNCFYCHREGQLDGERTMKPEEIERIVRIASRLGIKKVKLTGGEPTIRKDIVEIIRRIRPYVVDLSLTTNGTTLYTLAEELKEAGLDRVNISLDTLDRKKYKMITGFDVLDQVIKGIEKATKLFYPVKLNMVVMRGINDDEIWDLIRFAGKVNAILQLIEIEVPREMENSQFFKDFFYPLKPLEEEFEKIAVEIRERRMHRRRKYFLPVDGKVVEVEVVRSMHNTVFCMNCTRLRLTADGYLKTCLLRRDDLIDILGPLRNGASDAELVDIFKRAVLMRRPYWT</sequence>
<organism>
    <name type="scientific">Pyrococcus abyssi (strain GE5 / Orsay)</name>
    <dbReference type="NCBI Taxonomy" id="272844"/>
    <lineage>
        <taxon>Archaea</taxon>
        <taxon>Methanobacteriati</taxon>
        <taxon>Methanobacteriota</taxon>
        <taxon>Thermococci</taxon>
        <taxon>Thermococcales</taxon>
        <taxon>Thermococcaceae</taxon>
        <taxon>Pyrococcus</taxon>
    </lineage>
</organism>
<dbReference type="EC" id="4.1.99.22" evidence="1"/>
<dbReference type="EMBL" id="AJ248283">
    <property type="protein sequence ID" value="CAB49036.1"/>
    <property type="molecule type" value="Genomic_DNA"/>
</dbReference>
<dbReference type="EMBL" id="HE613800">
    <property type="protein sequence ID" value="CCE69488.1"/>
    <property type="molecule type" value="Genomic_DNA"/>
</dbReference>
<dbReference type="PIR" id="E75198">
    <property type="entry name" value="E75198"/>
</dbReference>
<dbReference type="RefSeq" id="WP_010867236.1">
    <property type="nucleotide sequence ID" value="NC_000868.1"/>
</dbReference>
<dbReference type="SMR" id="Q9V2G2"/>
<dbReference type="STRING" id="272844.PAB2273"/>
<dbReference type="KEGG" id="pab:PAB2273"/>
<dbReference type="PATRIC" id="fig|272844.11.peg.125"/>
<dbReference type="eggNOG" id="arCOG00930">
    <property type="taxonomic scope" value="Archaea"/>
</dbReference>
<dbReference type="HOGENOM" id="CLU_009273_0_1_2"/>
<dbReference type="OrthoDB" id="6925at2157"/>
<dbReference type="PhylomeDB" id="Q9V2G2"/>
<dbReference type="UniPathway" id="UPA00344"/>
<dbReference type="Proteomes" id="UP000000810">
    <property type="component" value="Chromosome"/>
</dbReference>
<dbReference type="Proteomes" id="UP000009139">
    <property type="component" value="Chromosome"/>
</dbReference>
<dbReference type="GO" id="GO:0051539">
    <property type="term" value="F:4 iron, 4 sulfur cluster binding"/>
    <property type="evidence" value="ECO:0007669"/>
    <property type="project" value="UniProtKB-UniRule"/>
</dbReference>
<dbReference type="GO" id="GO:0061799">
    <property type="term" value="F:cyclic pyranopterin monophosphate synthase activity"/>
    <property type="evidence" value="ECO:0007669"/>
    <property type="project" value="TreeGrafter"/>
</dbReference>
<dbReference type="GO" id="GO:0061798">
    <property type="term" value="F:GTP 3',8'-cyclase activity"/>
    <property type="evidence" value="ECO:0007669"/>
    <property type="project" value="UniProtKB-UniRule"/>
</dbReference>
<dbReference type="GO" id="GO:0005525">
    <property type="term" value="F:GTP binding"/>
    <property type="evidence" value="ECO:0007669"/>
    <property type="project" value="UniProtKB-UniRule"/>
</dbReference>
<dbReference type="GO" id="GO:0046872">
    <property type="term" value="F:metal ion binding"/>
    <property type="evidence" value="ECO:0007669"/>
    <property type="project" value="UniProtKB-KW"/>
</dbReference>
<dbReference type="GO" id="GO:1904047">
    <property type="term" value="F:S-adenosyl-L-methionine binding"/>
    <property type="evidence" value="ECO:0007669"/>
    <property type="project" value="UniProtKB-UniRule"/>
</dbReference>
<dbReference type="GO" id="GO:0006777">
    <property type="term" value="P:Mo-molybdopterin cofactor biosynthetic process"/>
    <property type="evidence" value="ECO:0007669"/>
    <property type="project" value="UniProtKB-UniRule"/>
</dbReference>
<dbReference type="CDD" id="cd01335">
    <property type="entry name" value="Radical_SAM"/>
    <property type="match status" value="1"/>
</dbReference>
<dbReference type="CDD" id="cd21117">
    <property type="entry name" value="Twitch_MoaA"/>
    <property type="match status" value="1"/>
</dbReference>
<dbReference type="Gene3D" id="3.20.20.70">
    <property type="entry name" value="Aldolase class I"/>
    <property type="match status" value="1"/>
</dbReference>
<dbReference type="HAMAP" id="MF_01225_A">
    <property type="entry name" value="MoaA_A"/>
    <property type="match status" value="1"/>
</dbReference>
<dbReference type="InterPro" id="IPR013785">
    <property type="entry name" value="Aldolase_TIM"/>
</dbReference>
<dbReference type="InterPro" id="IPR006638">
    <property type="entry name" value="Elp3/MiaA/NifB-like_rSAM"/>
</dbReference>
<dbReference type="InterPro" id="IPR013485">
    <property type="entry name" value="MoaA_arc"/>
</dbReference>
<dbReference type="InterPro" id="IPR000385">
    <property type="entry name" value="MoaA_NifB_PqqE_Fe-S-bd_CS"/>
</dbReference>
<dbReference type="InterPro" id="IPR010505">
    <property type="entry name" value="MoaA_twitch"/>
</dbReference>
<dbReference type="InterPro" id="IPR050105">
    <property type="entry name" value="MoCo_biosynth_MoaA/MoaC"/>
</dbReference>
<dbReference type="InterPro" id="IPR007197">
    <property type="entry name" value="rSAM"/>
</dbReference>
<dbReference type="NCBIfam" id="TIGR02668">
    <property type="entry name" value="moaA_archaeal"/>
    <property type="match status" value="1"/>
</dbReference>
<dbReference type="NCBIfam" id="NF001199">
    <property type="entry name" value="PRK00164.2-1"/>
    <property type="match status" value="1"/>
</dbReference>
<dbReference type="PANTHER" id="PTHR22960:SF0">
    <property type="entry name" value="MOLYBDENUM COFACTOR BIOSYNTHESIS PROTEIN 1"/>
    <property type="match status" value="1"/>
</dbReference>
<dbReference type="PANTHER" id="PTHR22960">
    <property type="entry name" value="MOLYBDOPTERIN COFACTOR SYNTHESIS PROTEIN A"/>
    <property type="match status" value="1"/>
</dbReference>
<dbReference type="Pfam" id="PF13353">
    <property type="entry name" value="Fer4_12"/>
    <property type="match status" value="1"/>
</dbReference>
<dbReference type="Pfam" id="PF06463">
    <property type="entry name" value="Mob_synth_C"/>
    <property type="match status" value="1"/>
</dbReference>
<dbReference type="Pfam" id="PF04055">
    <property type="entry name" value="Radical_SAM"/>
    <property type="match status" value="1"/>
</dbReference>
<dbReference type="SFLD" id="SFLDG01383">
    <property type="entry name" value="cyclic_pyranopterin_phosphate"/>
    <property type="match status" value="1"/>
</dbReference>
<dbReference type="SFLD" id="SFLDG01216">
    <property type="entry name" value="thioether_bond_formation_requi"/>
    <property type="match status" value="1"/>
</dbReference>
<dbReference type="SMART" id="SM00729">
    <property type="entry name" value="Elp3"/>
    <property type="match status" value="1"/>
</dbReference>
<dbReference type="SUPFAM" id="SSF102114">
    <property type="entry name" value="Radical SAM enzymes"/>
    <property type="match status" value="1"/>
</dbReference>
<dbReference type="PROSITE" id="PS01305">
    <property type="entry name" value="MOAA_NIFB_PQQE"/>
    <property type="match status" value="1"/>
</dbReference>
<dbReference type="PROSITE" id="PS51918">
    <property type="entry name" value="RADICAL_SAM"/>
    <property type="match status" value="1"/>
</dbReference>
<accession>Q9V2G2</accession>
<accession>G8ZFU7</accession>
<keyword id="KW-0004">4Fe-4S</keyword>
<keyword id="KW-0342">GTP-binding</keyword>
<keyword id="KW-0408">Iron</keyword>
<keyword id="KW-0411">Iron-sulfur</keyword>
<keyword id="KW-0456">Lyase</keyword>
<keyword id="KW-0479">Metal-binding</keyword>
<keyword id="KW-0501">Molybdenum cofactor biosynthesis</keyword>
<keyword id="KW-0547">Nucleotide-binding</keyword>
<keyword id="KW-0949">S-adenosyl-L-methionine</keyword>
<proteinExistence type="inferred from homology"/>
<feature type="chain" id="PRO_0000153022" description="Probable GTP 3',8-cyclase">
    <location>
        <begin position="1"/>
        <end position="306"/>
    </location>
</feature>
<feature type="domain" description="Radical SAM core" evidence="2">
    <location>
        <begin position="5"/>
        <end position="232"/>
    </location>
</feature>
<feature type="binding site" evidence="1">
    <location>
        <position position="14"/>
    </location>
    <ligand>
        <name>GTP</name>
        <dbReference type="ChEBI" id="CHEBI:37565"/>
    </ligand>
</feature>
<feature type="binding site" evidence="1">
    <location>
        <position position="21"/>
    </location>
    <ligand>
        <name>[4Fe-4S] cluster</name>
        <dbReference type="ChEBI" id="CHEBI:49883"/>
        <label>1</label>
        <note>4Fe-4S-S-AdoMet</note>
    </ligand>
</feature>
<feature type="binding site" evidence="1">
    <location>
        <position position="25"/>
    </location>
    <ligand>
        <name>[4Fe-4S] cluster</name>
        <dbReference type="ChEBI" id="CHEBI:49883"/>
        <label>1</label>
        <note>4Fe-4S-S-AdoMet</note>
    </ligand>
</feature>
<feature type="binding site" evidence="1">
    <location>
        <position position="27"/>
    </location>
    <ligand>
        <name>S-adenosyl-L-methionine</name>
        <dbReference type="ChEBI" id="CHEBI:59789"/>
    </ligand>
</feature>
<feature type="binding site" evidence="1">
    <location>
        <position position="28"/>
    </location>
    <ligand>
        <name>[4Fe-4S] cluster</name>
        <dbReference type="ChEBI" id="CHEBI:49883"/>
        <label>1</label>
        <note>4Fe-4S-S-AdoMet</note>
    </ligand>
</feature>
<feature type="binding site" evidence="1">
    <location>
        <position position="61"/>
    </location>
    <ligand>
        <name>GTP</name>
        <dbReference type="ChEBI" id="CHEBI:37565"/>
    </ligand>
</feature>
<feature type="binding site" evidence="1">
    <location>
        <position position="65"/>
    </location>
    <ligand>
        <name>S-adenosyl-L-methionine</name>
        <dbReference type="ChEBI" id="CHEBI:59789"/>
    </ligand>
</feature>
<feature type="binding site" evidence="1">
    <location>
        <position position="90"/>
    </location>
    <ligand>
        <name>GTP</name>
        <dbReference type="ChEBI" id="CHEBI:37565"/>
    </ligand>
</feature>
<feature type="binding site" evidence="1">
    <location>
        <position position="114"/>
    </location>
    <ligand>
        <name>S-adenosyl-L-methionine</name>
        <dbReference type="ChEBI" id="CHEBI:59789"/>
    </ligand>
</feature>
<feature type="binding site" evidence="1">
    <location>
        <position position="150"/>
    </location>
    <ligand>
        <name>GTP</name>
        <dbReference type="ChEBI" id="CHEBI:37565"/>
    </ligand>
</feature>
<feature type="binding site" evidence="1">
    <location>
        <position position="189"/>
    </location>
    <ligand>
        <name>S-adenosyl-L-methionine</name>
        <dbReference type="ChEBI" id="CHEBI:59789"/>
    </ligand>
</feature>
<feature type="binding site" evidence="1">
    <location>
        <position position="250"/>
    </location>
    <ligand>
        <name>[4Fe-4S] cluster</name>
        <dbReference type="ChEBI" id="CHEBI:49883"/>
        <label>2</label>
        <note>4Fe-4S-substrate</note>
    </ligand>
</feature>
<feature type="binding site" evidence="1">
    <location>
        <position position="253"/>
    </location>
    <ligand>
        <name>[4Fe-4S] cluster</name>
        <dbReference type="ChEBI" id="CHEBI:49883"/>
        <label>2</label>
        <note>4Fe-4S-substrate</note>
    </ligand>
</feature>
<feature type="binding site" evidence="1">
    <location>
        <begin position="255"/>
        <end position="257"/>
    </location>
    <ligand>
        <name>GTP</name>
        <dbReference type="ChEBI" id="CHEBI:37565"/>
    </ligand>
</feature>
<feature type="binding site" evidence="1">
    <location>
        <position position="267"/>
    </location>
    <ligand>
        <name>[4Fe-4S] cluster</name>
        <dbReference type="ChEBI" id="CHEBI:49883"/>
        <label>2</label>
        <note>4Fe-4S-substrate</note>
    </ligand>
</feature>